<dbReference type="EC" id="3.5.3.8" evidence="1"/>
<dbReference type="EMBL" id="CP000431">
    <property type="protein sequence ID" value="ABG96426.1"/>
    <property type="molecule type" value="Genomic_DNA"/>
</dbReference>
<dbReference type="RefSeq" id="WP_009477711.1">
    <property type="nucleotide sequence ID" value="NC_008268.1"/>
</dbReference>
<dbReference type="SMR" id="Q0S7R0"/>
<dbReference type="KEGG" id="rha:RHA1_ro04640"/>
<dbReference type="eggNOG" id="COG0010">
    <property type="taxonomic scope" value="Bacteria"/>
</dbReference>
<dbReference type="HOGENOM" id="CLU_039478_2_0_11"/>
<dbReference type="OrthoDB" id="9789727at2"/>
<dbReference type="UniPathway" id="UPA00379">
    <property type="reaction ID" value="UER00552"/>
</dbReference>
<dbReference type="Proteomes" id="UP000008710">
    <property type="component" value="Chromosome"/>
</dbReference>
<dbReference type="GO" id="GO:0008783">
    <property type="term" value="F:agmatinase activity"/>
    <property type="evidence" value="ECO:0007669"/>
    <property type="project" value="TreeGrafter"/>
</dbReference>
<dbReference type="GO" id="GO:0050415">
    <property type="term" value="F:formimidoylglutamase activity"/>
    <property type="evidence" value="ECO:0007669"/>
    <property type="project" value="UniProtKB-UniRule"/>
</dbReference>
<dbReference type="GO" id="GO:0030145">
    <property type="term" value="F:manganese ion binding"/>
    <property type="evidence" value="ECO:0007669"/>
    <property type="project" value="UniProtKB-UniRule"/>
</dbReference>
<dbReference type="GO" id="GO:0019556">
    <property type="term" value="P:L-histidine catabolic process to glutamate and formamide"/>
    <property type="evidence" value="ECO:0007669"/>
    <property type="project" value="UniProtKB-UniPathway"/>
</dbReference>
<dbReference type="GO" id="GO:0019557">
    <property type="term" value="P:L-histidine catabolic process to glutamate and formate"/>
    <property type="evidence" value="ECO:0007669"/>
    <property type="project" value="UniProtKB-UniPathway"/>
</dbReference>
<dbReference type="GO" id="GO:0033389">
    <property type="term" value="P:putrescine biosynthetic process from arginine, via agmatine"/>
    <property type="evidence" value="ECO:0007669"/>
    <property type="project" value="TreeGrafter"/>
</dbReference>
<dbReference type="CDD" id="cd09988">
    <property type="entry name" value="Formimidoylglutamase"/>
    <property type="match status" value="1"/>
</dbReference>
<dbReference type="Gene3D" id="3.40.800.10">
    <property type="entry name" value="Ureohydrolase domain"/>
    <property type="match status" value="1"/>
</dbReference>
<dbReference type="HAMAP" id="MF_00737">
    <property type="entry name" value="Formimidoylglutam"/>
    <property type="match status" value="1"/>
</dbReference>
<dbReference type="InterPro" id="IPR005923">
    <property type="entry name" value="HutG"/>
</dbReference>
<dbReference type="InterPro" id="IPR006035">
    <property type="entry name" value="Ureohydrolase"/>
</dbReference>
<dbReference type="InterPro" id="IPR023696">
    <property type="entry name" value="Ureohydrolase_dom_sf"/>
</dbReference>
<dbReference type="InterPro" id="IPR020855">
    <property type="entry name" value="Ureohydrolase_Mn_BS"/>
</dbReference>
<dbReference type="NCBIfam" id="TIGR01227">
    <property type="entry name" value="hutG"/>
    <property type="match status" value="1"/>
</dbReference>
<dbReference type="PANTHER" id="PTHR11358">
    <property type="entry name" value="ARGINASE/AGMATINASE"/>
    <property type="match status" value="1"/>
</dbReference>
<dbReference type="PANTHER" id="PTHR11358:SF35">
    <property type="entry name" value="FORMIMIDOYLGLUTAMASE"/>
    <property type="match status" value="1"/>
</dbReference>
<dbReference type="Pfam" id="PF00491">
    <property type="entry name" value="Arginase"/>
    <property type="match status" value="1"/>
</dbReference>
<dbReference type="PIRSF" id="PIRSF036979">
    <property type="entry name" value="Arginase"/>
    <property type="match status" value="1"/>
</dbReference>
<dbReference type="PRINTS" id="PR00116">
    <property type="entry name" value="ARGINASE"/>
</dbReference>
<dbReference type="SUPFAM" id="SSF52768">
    <property type="entry name" value="Arginase/deacetylase"/>
    <property type="match status" value="1"/>
</dbReference>
<dbReference type="PROSITE" id="PS01053">
    <property type="entry name" value="ARGINASE_1"/>
    <property type="match status" value="1"/>
</dbReference>
<dbReference type="PROSITE" id="PS51409">
    <property type="entry name" value="ARGINASE_2"/>
    <property type="match status" value="1"/>
</dbReference>
<accession>Q0S7R0</accession>
<sequence>MMENLLIPPPPWVGRVDGTSSHHLRWHQAVTPLHDGAEPGACVLIGFSSDEGVERNKGRRGAARGPDALRGALSSMALAEPLRVYDAGTVAVTDNRLEAGQMALGSVVAATLDAGQFPVVLGGGHEVAYGTYLGLAQAAVRTPKRRIGILNLDAHFDLRSDPVPSSGTPFRQILEQEHASGTALQYSVLGISQPSNTTALFDTARGYDVRYLLDDDCSVSDRHRVAVFVSEFLSDVDLVYLTIDLDVLPAAVAPGVSAPAAYGVPAETIQFVCDAVAASGKLAVCDVAELNPSFDIDNRTARTAARLIHRIVTKRIPIAV</sequence>
<reference key="1">
    <citation type="journal article" date="2006" name="Proc. Natl. Acad. Sci. U.S.A.">
        <title>The complete genome of Rhodococcus sp. RHA1 provides insights into a catabolic powerhouse.</title>
        <authorList>
            <person name="McLeod M.P."/>
            <person name="Warren R.L."/>
            <person name="Hsiao W.W.L."/>
            <person name="Araki N."/>
            <person name="Myhre M."/>
            <person name="Fernandes C."/>
            <person name="Miyazawa D."/>
            <person name="Wong W."/>
            <person name="Lillquist A.L."/>
            <person name="Wang D."/>
            <person name="Dosanjh M."/>
            <person name="Hara H."/>
            <person name="Petrescu A."/>
            <person name="Morin R.D."/>
            <person name="Yang G."/>
            <person name="Stott J.M."/>
            <person name="Schein J.E."/>
            <person name="Shin H."/>
            <person name="Smailus D."/>
            <person name="Siddiqui A.S."/>
            <person name="Marra M.A."/>
            <person name="Jones S.J.M."/>
            <person name="Holt R."/>
            <person name="Brinkman F.S.L."/>
            <person name="Miyauchi K."/>
            <person name="Fukuda M."/>
            <person name="Davies J.E."/>
            <person name="Mohn W.W."/>
            <person name="Eltis L.D."/>
        </authorList>
    </citation>
    <scope>NUCLEOTIDE SEQUENCE [LARGE SCALE GENOMIC DNA]</scope>
    <source>
        <strain>RHA1</strain>
    </source>
</reference>
<proteinExistence type="inferred from homology"/>
<evidence type="ECO:0000255" key="1">
    <source>
        <dbReference type="HAMAP-Rule" id="MF_00737"/>
    </source>
</evidence>
<name>HUTG_RHOJR</name>
<protein>
    <recommendedName>
        <fullName evidence="1">Formimidoylglutamase</fullName>
        <ecNumber evidence="1">3.5.3.8</ecNumber>
    </recommendedName>
    <alternativeName>
        <fullName evidence="1">Formiminoglutamase</fullName>
    </alternativeName>
    <alternativeName>
        <fullName evidence="1">Formiminoglutamate hydrolase</fullName>
    </alternativeName>
</protein>
<comment type="function">
    <text evidence="1">Catalyzes the conversion of N-formimidoyl-L-glutamate to L-glutamate and formamide.</text>
</comment>
<comment type="catalytic activity">
    <reaction evidence="1">
        <text>N-formimidoyl-L-glutamate + H2O = formamide + L-glutamate</text>
        <dbReference type="Rhea" id="RHEA:22492"/>
        <dbReference type="ChEBI" id="CHEBI:15377"/>
        <dbReference type="ChEBI" id="CHEBI:16397"/>
        <dbReference type="ChEBI" id="CHEBI:29985"/>
        <dbReference type="ChEBI" id="CHEBI:58928"/>
        <dbReference type="EC" id="3.5.3.8"/>
    </reaction>
</comment>
<comment type="cofactor">
    <cofactor evidence="1">
        <name>Mn(2+)</name>
        <dbReference type="ChEBI" id="CHEBI:29035"/>
    </cofactor>
    <text evidence="1">Binds 2 manganese ions per subunit.</text>
</comment>
<comment type="pathway">
    <text evidence="1">Amino-acid degradation; L-histidine degradation into L-glutamate; L-glutamate from N-formimidoyl-L-glutamate (hydrolase route): step 1/1.</text>
</comment>
<comment type="similarity">
    <text evidence="1">Belongs to the arginase family.</text>
</comment>
<gene>
    <name evidence="1" type="primary">hutG</name>
    <name type="ordered locus">RHA1_ro04640</name>
</gene>
<keyword id="KW-0369">Histidine metabolism</keyword>
<keyword id="KW-0378">Hydrolase</keyword>
<keyword id="KW-0464">Manganese</keyword>
<keyword id="KW-0479">Metal-binding</keyword>
<feature type="chain" id="PRO_0000258258" description="Formimidoylglutamase">
    <location>
        <begin position="1"/>
        <end position="320"/>
    </location>
</feature>
<feature type="binding site" evidence="1">
    <location>
        <position position="125"/>
    </location>
    <ligand>
        <name>Mn(2+)</name>
        <dbReference type="ChEBI" id="CHEBI:29035"/>
        <label>1</label>
    </ligand>
</feature>
<feature type="binding site" evidence="1">
    <location>
        <position position="153"/>
    </location>
    <ligand>
        <name>Mn(2+)</name>
        <dbReference type="ChEBI" id="CHEBI:29035"/>
        <label>1</label>
    </ligand>
</feature>
<feature type="binding site" evidence="1">
    <location>
        <position position="153"/>
    </location>
    <ligand>
        <name>Mn(2+)</name>
        <dbReference type="ChEBI" id="CHEBI:29035"/>
        <label>2</label>
    </ligand>
</feature>
<feature type="binding site" evidence="1">
    <location>
        <position position="155"/>
    </location>
    <ligand>
        <name>Mn(2+)</name>
        <dbReference type="ChEBI" id="CHEBI:29035"/>
        <label>2</label>
    </ligand>
</feature>
<feature type="binding site" evidence="1">
    <location>
        <position position="157"/>
    </location>
    <ligand>
        <name>Mn(2+)</name>
        <dbReference type="ChEBI" id="CHEBI:29035"/>
        <label>1</label>
    </ligand>
</feature>
<feature type="binding site" evidence="1">
    <location>
        <position position="244"/>
    </location>
    <ligand>
        <name>Mn(2+)</name>
        <dbReference type="ChEBI" id="CHEBI:29035"/>
        <label>1</label>
    </ligand>
</feature>
<feature type="binding site" evidence="1">
    <location>
        <position position="244"/>
    </location>
    <ligand>
        <name>Mn(2+)</name>
        <dbReference type="ChEBI" id="CHEBI:29035"/>
        <label>2</label>
    </ligand>
</feature>
<feature type="binding site" evidence="1">
    <location>
        <position position="246"/>
    </location>
    <ligand>
        <name>Mn(2+)</name>
        <dbReference type="ChEBI" id="CHEBI:29035"/>
        <label>2</label>
    </ligand>
</feature>
<organism>
    <name type="scientific">Rhodococcus jostii (strain RHA1)</name>
    <dbReference type="NCBI Taxonomy" id="101510"/>
    <lineage>
        <taxon>Bacteria</taxon>
        <taxon>Bacillati</taxon>
        <taxon>Actinomycetota</taxon>
        <taxon>Actinomycetes</taxon>
        <taxon>Mycobacteriales</taxon>
        <taxon>Nocardiaceae</taxon>
        <taxon>Rhodococcus</taxon>
    </lineage>
</organism>